<reference key="1">
    <citation type="journal article" date="2000" name="Nature">
        <title>Sequence and analysis of chromosome 5 of the plant Arabidopsis thaliana.</title>
        <authorList>
            <person name="Tabata S."/>
            <person name="Kaneko T."/>
            <person name="Nakamura Y."/>
            <person name="Kotani H."/>
            <person name="Kato T."/>
            <person name="Asamizu E."/>
            <person name="Miyajima N."/>
            <person name="Sasamoto S."/>
            <person name="Kimura T."/>
            <person name="Hosouchi T."/>
            <person name="Kawashima K."/>
            <person name="Kohara M."/>
            <person name="Matsumoto M."/>
            <person name="Matsuno A."/>
            <person name="Muraki A."/>
            <person name="Nakayama S."/>
            <person name="Nakazaki N."/>
            <person name="Naruo K."/>
            <person name="Okumura S."/>
            <person name="Shinpo S."/>
            <person name="Takeuchi C."/>
            <person name="Wada T."/>
            <person name="Watanabe A."/>
            <person name="Yamada M."/>
            <person name="Yasuda M."/>
            <person name="Sato S."/>
            <person name="de la Bastide M."/>
            <person name="Huang E."/>
            <person name="Spiegel L."/>
            <person name="Gnoj L."/>
            <person name="O'Shaughnessy A."/>
            <person name="Preston R."/>
            <person name="Habermann K."/>
            <person name="Murray J."/>
            <person name="Johnson D."/>
            <person name="Rohlfing T."/>
            <person name="Nelson J."/>
            <person name="Stoneking T."/>
            <person name="Pepin K."/>
            <person name="Spieth J."/>
            <person name="Sekhon M."/>
            <person name="Armstrong J."/>
            <person name="Becker M."/>
            <person name="Belter E."/>
            <person name="Cordum H."/>
            <person name="Cordes M."/>
            <person name="Courtney L."/>
            <person name="Courtney W."/>
            <person name="Dante M."/>
            <person name="Du H."/>
            <person name="Edwards J."/>
            <person name="Fryman J."/>
            <person name="Haakensen B."/>
            <person name="Lamar E."/>
            <person name="Latreille P."/>
            <person name="Leonard S."/>
            <person name="Meyer R."/>
            <person name="Mulvaney E."/>
            <person name="Ozersky P."/>
            <person name="Riley A."/>
            <person name="Strowmatt C."/>
            <person name="Wagner-McPherson C."/>
            <person name="Wollam A."/>
            <person name="Yoakum M."/>
            <person name="Bell M."/>
            <person name="Dedhia N."/>
            <person name="Parnell L."/>
            <person name="Shah R."/>
            <person name="Rodriguez M."/>
            <person name="Hoon See L."/>
            <person name="Vil D."/>
            <person name="Baker J."/>
            <person name="Kirchoff K."/>
            <person name="Toth K."/>
            <person name="King L."/>
            <person name="Bahret A."/>
            <person name="Miller B."/>
            <person name="Marra M.A."/>
            <person name="Martienssen R."/>
            <person name="McCombie W.R."/>
            <person name="Wilson R.K."/>
            <person name="Murphy G."/>
            <person name="Bancroft I."/>
            <person name="Volckaert G."/>
            <person name="Wambutt R."/>
            <person name="Duesterhoeft A."/>
            <person name="Stiekema W."/>
            <person name="Pohl T."/>
            <person name="Entian K.-D."/>
            <person name="Terryn N."/>
            <person name="Hartley N."/>
            <person name="Bent E."/>
            <person name="Johnson S."/>
            <person name="Langham S.-A."/>
            <person name="McCullagh B."/>
            <person name="Robben J."/>
            <person name="Grymonprez B."/>
            <person name="Zimmermann W."/>
            <person name="Ramsperger U."/>
            <person name="Wedler H."/>
            <person name="Balke K."/>
            <person name="Wedler E."/>
            <person name="Peters S."/>
            <person name="van Staveren M."/>
            <person name="Dirkse W."/>
            <person name="Mooijman P."/>
            <person name="Klein Lankhorst R."/>
            <person name="Weitzenegger T."/>
            <person name="Bothe G."/>
            <person name="Rose M."/>
            <person name="Hauf J."/>
            <person name="Berneiser S."/>
            <person name="Hempel S."/>
            <person name="Feldpausch M."/>
            <person name="Lamberth S."/>
            <person name="Villarroel R."/>
            <person name="Gielen J."/>
            <person name="Ardiles W."/>
            <person name="Bents O."/>
            <person name="Lemcke K."/>
            <person name="Kolesov G."/>
            <person name="Mayer K.F.X."/>
            <person name="Rudd S."/>
            <person name="Schoof H."/>
            <person name="Schueller C."/>
            <person name="Zaccaria P."/>
            <person name="Mewes H.-W."/>
            <person name="Bevan M."/>
            <person name="Fransz P.F."/>
        </authorList>
    </citation>
    <scope>NUCLEOTIDE SEQUENCE [LARGE SCALE GENOMIC DNA]</scope>
    <source>
        <strain>cv. Columbia</strain>
    </source>
</reference>
<reference key="2">
    <citation type="journal article" date="2017" name="Plant J.">
        <title>Araport11: a complete reannotation of the Arabidopsis thaliana reference genome.</title>
        <authorList>
            <person name="Cheng C.Y."/>
            <person name="Krishnakumar V."/>
            <person name="Chan A.P."/>
            <person name="Thibaud-Nissen F."/>
            <person name="Schobel S."/>
            <person name="Town C.D."/>
        </authorList>
    </citation>
    <scope>GENOME REANNOTATION</scope>
    <source>
        <strain>cv. Columbia</strain>
    </source>
</reference>
<reference key="3">
    <citation type="submission" date="2006-03" db="EMBL/GenBank/DDBJ databases">
        <title>Arabidopsis ORF clones.</title>
        <authorList>
            <person name="Shinn P."/>
            <person name="Chen H."/>
            <person name="Kim C.J."/>
            <person name="Ecker J.R."/>
        </authorList>
    </citation>
    <scope>NUCLEOTIDE SEQUENCE [LARGE SCALE MRNA]</scope>
    <source>
        <strain>cv. Columbia</strain>
    </source>
</reference>
<reference key="4">
    <citation type="submission" date="2006-07" db="EMBL/GenBank/DDBJ databases">
        <title>Large-scale analysis of RIKEN Arabidopsis full-length (RAFL) cDNAs.</title>
        <authorList>
            <person name="Totoki Y."/>
            <person name="Seki M."/>
            <person name="Ishida J."/>
            <person name="Nakajima M."/>
            <person name="Enju A."/>
            <person name="Kamiya A."/>
            <person name="Narusaka M."/>
            <person name="Shin-i T."/>
            <person name="Nakagawa M."/>
            <person name="Sakamoto N."/>
            <person name="Oishi K."/>
            <person name="Kohara Y."/>
            <person name="Kobayashi M."/>
            <person name="Toyoda A."/>
            <person name="Sakaki Y."/>
            <person name="Sakurai T."/>
            <person name="Iida K."/>
            <person name="Akiyama K."/>
            <person name="Satou M."/>
            <person name="Toyoda T."/>
            <person name="Konagaya A."/>
            <person name="Carninci P."/>
            <person name="Kawai J."/>
            <person name="Hayashizaki Y."/>
            <person name="Shinozaki K."/>
        </authorList>
    </citation>
    <scope>NUCLEOTIDE SEQUENCE [LARGE SCALE MRNA]</scope>
    <source>
        <strain>cv. Columbia</strain>
    </source>
</reference>
<reference key="5">
    <citation type="journal article" date="2017" name="New Phytol.">
        <title>A mRNA methylation in Arabidopsis reveals a role for the conserved E3 ubiquitin ligase HAKAI.</title>
        <authorList>
            <person name="Ruzicka K."/>
            <person name="Zhang M."/>
            <person name="Campilho A."/>
            <person name="Bodi Z."/>
            <person name="Kashif M."/>
            <person name="Saleh M."/>
            <person name="Eeckhout D."/>
            <person name="El-Showk S."/>
            <person name="Li H."/>
            <person name="Zhong S."/>
            <person name="De Jaeger G."/>
            <person name="Mongan N.P."/>
            <person name="Hejatko J."/>
            <person name="Helariutta Y."/>
            <person name="Fray R.G."/>
        </authorList>
    </citation>
    <scope>FUNCTION</scope>
    <scope>IDENTIFICATION BY MASS SPECTROMETRY</scope>
    <scope>INTERACTION WITH MTB AND VIR</scope>
    <scope>SUBCELLULAR LOCATION</scope>
</reference>
<organism>
    <name type="scientific">Arabidopsis thaliana</name>
    <name type="common">Mouse-ear cress</name>
    <dbReference type="NCBI Taxonomy" id="3702"/>
    <lineage>
        <taxon>Eukaryota</taxon>
        <taxon>Viridiplantae</taxon>
        <taxon>Streptophyta</taxon>
        <taxon>Embryophyta</taxon>
        <taxon>Tracheophyta</taxon>
        <taxon>Spermatophyta</taxon>
        <taxon>Magnoliopsida</taxon>
        <taxon>eudicotyledons</taxon>
        <taxon>Gunneridae</taxon>
        <taxon>Pentapetalae</taxon>
        <taxon>rosids</taxon>
        <taxon>malvids</taxon>
        <taxon>Brassicales</taxon>
        <taxon>Brassicaceae</taxon>
        <taxon>Camelineae</taxon>
        <taxon>Arabidopsis</taxon>
    </lineage>
</organism>
<proteinExistence type="evidence at protein level"/>
<comment type="function">
    <text evidence="4">Probable E3 ubiquitin-protein ligase which is a subunit of the N6-methyltransferase complex, a multiprotein complex that mediates N6-methyladenosine (m6A) methylation at the 5'-[AG]GAC-3' consensus sites of some mRNAs (PubMed:28503769). Associates with MTA, MTB, FIP37 and VIR to form the m6A writer complex which is essential for adenosine methylation at specific mRNA sequences (PubMed:28503769). N6-methyladenosine (m6A) plays a role in mRNA stability, processing, translation efficiency and editing (PubMed:28503769).</text>
</comment>
<comment type="catalytic activity">
    <reaction evidence="6">
        <text>S-ubiquitinyl-[E2 ubiquitin-conjugating enzyme]-L-cysteine + [acceptor protein]-L-lysine = [E2 ubiquitin-conjugating enzyme]-L-cysteine + N(6)-ubiquitinyl-[acceptor protein]-L-lysine.</text>
        <dbReference type="EC" id="2.3.2.27"/>
    </reaction>
</comment>
<comment type="subunit">
    <text evidence="4">Interacts with MTB and VIR (PubMed:28503769). Associates with MTA, MTB, FIP37 and VIR to form the m6A writer complex which is essential for adenosine methylation at specific mRNA sequences (PubMed:28503769).</text>
</comment>
<comment type="interaction">
    <interactant intactId="EBI-15192365">
        <id>Q9LFC0</id>
    </interactant>
    <interactant intactId="EBI-15192363">
        <id>Q5PP65</id>
        <label>At2g35430</label>
    </interactant>
    <organismsDiffer>false</organismsDiffer>
    <experiments>3</experiments>
</comment>
<comment type="subcellular location">
    <subcellularLocation>
        <location evidence="4">Nucleus speckle</location>
    </subcellularLocation>
    <subcellularLocation>
        <location evidence="4">Nucleus</location>
        <location evidence="4">Nucleoplasm</location>
    </subcellularLocation>
</comment>
<comment type="similarity">
    <text evidence="6">Belongs to the Hakai family.</text>
</comment>
<feature type="chain" id="PRO_0000445519" description="E3 ubiquitin-protein ligase HAKAI homolog">
    <location>
        <begin position="1"/>
        <end position="360"/>
    </location>
</feature>
<feature type="zinc finger region" description="RING-type" evidence="2">
    <location>
        <begin position="72"/>
        <end position="107"/>
    </location>
</feature>
<feature type="zinc finger region" description="C2H2-type" evidence="1">
    <location>
        <begin position="123"/>
        <end position="148"/>
    </location>
</feature>
<feature type="region of interest" description="Disordered" evidence="3">
    <location>
        <begin position="1"/>
        <end position="24"/>
    </location>
</feature>
<feature type="region of interest" description="Disordered" evidence="3">
    <location>
        <begin position="156"/>
        <end position="360"/>
    </location>
</feature>
<feature type="compositionally biased region" description="Basic and acidic residues" evidence="3">
    <location>
        <begin position="1"/>
        <end position="11"/>
    </location>
</feature>
<feature type="compositionally biased region" description="Polar residues" evidence="3">
    <location>
        <begin position="163"/>
        <end position="179"/>
    </location>
</feature>
<feature type="compositionally biased region" description="Polar residues" evidence="3">
    <location>
        <begin position="186"/>
        <end position="214"/>
    </location>
</feature>
<feature type="compositionally biased region" description="Polar residues" evidence="3">
    <location>
        <begin position="270"/>
        <end position="283"/>
    </location>
</feature>
<feature type="compositionally biased region" description="Low complexity" evidence="3">
    <location>
        <begin position="293"/>
        <end position="304"/>
    </location>
</feature>
<keyword id="KW-0479">Metal-binding</keyword>
<keyword id="KW-0539">Nucleus</keyword>
<keyword id="KW-1185">Reference proteome</keyword>
<keyword id="KW-0808">Transferase</keyword>
<keyword id="KW-0833">Ubl conjugation pathway</keyword>
<keyword id="KW-0862">Zinc</keyword>
<keyword id="KW-0863">Zinc-finger</keyword>
<dbReference type="EC" id="2.3.2.27" evidence="6"/>
<dbReference type="EMBL" id="AL137189">
    <property type="protein sequence ID" value="CAB69844.1"/>
    <property type="molecule type" value="Genomic_DNA"/>
</dbReference>
<dbReference type="EMBL" id="CP002688">
    <property type="protein sequence ID" value="AED90305.1"/>
    <property type="molecule type" value="Genomic_DNA"/>
</dbReference>
<dbReference type="EMBL" id="CP002688">
    <property type="protein sequence ID" value="ANM69516.1"/>
    <property type="molecule type" value="Genomic_DNA"/>
</dbReference>
<dbReference type="EMBL" id="BT024744">
    <property type="protein sequence ID" value="ABD59082.1"/>
    <property type="molecule type" value="mRNA"/>
</dbReference>
<dbReference type="EMBL" id="AK227241">
    <property type="protein sequence ID" value="BAE99278.1"/>
    <property type="molecule type" value="mRNA"/>
</dbReference>
<dbReference type="PIR" id="T45956">
    <property type="entry name" value="T45956"/>
</dbReference>
<dbReference type="RefSeq" id="NP_001331186.1">
    <property type="nucleotide sequence ID" value="NM_001342575.1"/>
</dbReference>
<dbReference type="RefSeq" id="NP_195736.1">
    <property type="nucleotide sequence ID" value="NM_120194.5"/>
</dbReference>
<dbReference type="SMR" id="Q9LFC0"/>
<dbReference type="FunCoup" id="Q9LFC0">
    <property type="interactions" value="1769"/>
</dbReference>
<dbReference type="IntAct" id="Q9LFC0">
    <property type="interactions" value="15"/>
</dbReference>
<dbReference type="STRING" id="3702.Q9LFC0"/>
<dbReference type="iPTMnet" id="Q9LFC0"/>
<dbReference type="PaxDb" id="3702-AT5G01160.1"/>
<dbReference type="ProteomicsDB" id="247350"/>
<dbReference type="EnsemblPlants" id="AT5G01160.1">
    <property type="protein sequence ID" value="AT5G01160.1"/>
    <property type="gene ID" value="AT5G01160"/>
</dbReference>
<dbReference type="EnsemblPlants" id="AT5G01160.2">
    <property type="protein sequence ID" value="AT5G01160.2"/>
    <property type="gene ID" value="AT5G01160"/>
</dbReference>
<dbReference type="GeneID" id="831742"/>
<dbReference type="Gramene" id="AT5G01160.1">
    <property type="protein sequence ID" value="AT5G01160.1"/>
    <property type="gene ID" value="AT5G01160"/>
</dbReference>
<dbReference type="Gramene" id="AT5G01160.2">
    <property type="protein sequence ID" value="AT5G01160.2"/>
    <property type="gene ID" value="AT5G01160"/>
</dbReference>
<dbReference type="KEGG" id="ath:AT5G01160"/>
<dbReference type="Araport" id="AT5G01160"/>
<dbReference type="TAIR" id="AT5G01160">
    <property type="gene designation" value="HAKAI"/>
</dbReference>
<dbReference type="eggNOG" id="KOG2932">
    <property type="taxonomic scope" value="Eukaryota"/>
</dbReference>
<dbReference type="HOGENOM" id="CLU_041733_0_0_1"/>
<dbReference type="InParanoid" id="Q9LFC0"/>
<dbReference type="OMA" id="DHTHCPR"/>
<dbReference type="PhylomeDB" id="Q9LFC0"/>
<dbReference type="PRO" id="PR:Q9LFC0"/>
<dbReference type="Proteomes" id="UP000006548">
    <property type="component" value="Chromosome 5"/>
</dbReference>
<dbReference type="ExpressionAtlas" id="Q9LFC0">
    <property type="expression patterns" value="baseline and differential"/>
</dbReference>
<dbReference type="GO" id="GO:0016607">
    <property type="term" value="C:nuclear speck"/>
    <property type="evidence" value="ECO:0007669"/>
    <property type="project" value="UniProtKB-SubCell"/>
</dbReference>
<dbReference type="GO" id="GO:0036396">
    <property type="term" value="C:RNA N6-methyladenosine methyltransferase complex"/>
    <property type="evidence" value="ECO:0000314"/>
    <property type="project" value="UniProtKB"/>
</dbReference>
<dbReference type="GO" id="GO:0061630">
    <property type="term" value="F:ubiquitin protein ligase activity"/>
    <property type="evidence" value="ECO:0007669"/>
    <property type="project" value="InterPro"/>
</dbReference>
<dbReference type="GO" id="GO:0008270">
    <property type="term" value="F:zinc ion binding"/>
    <property type="evidence" value="ECO:0007669"/>
    <property type="project" value="UniProtKB-KW"/>
</dbReference>
<dbReference type="GO" id="GO:0016567">
    <property type="term" value="P:protein ubiquitination"/>
    <property type="evidence" value="ECO:0007669"/>
    <property type="project" value="InterPro"/>
</dbReference>
<dbReference type="CDD" id="cd16508">
    <property type="entry name" value="RING-HC_HAKAI-like"/>
    <property type="match status" value="1"/>
</dbReference>
<dbReference type="FunFam" id="3.30.40.10:FF:000280">
    <property type="entry name" value="E3 ubiquitin-protein ligase Hakai"/>
    <property type="match status" value="1"/>
</dbReference>
<dbReference type="Gene3D" id="3.30.40.10">
    <property type="entry name" value="Zinc/RING finger domain, C3HC4 (zinc finger)"/>
    <property type="match status" value="1"/>
</dbReference>
<dbReference type="InterPro" id="IPR040380">
    <property type="entry name" value="HAKAI-like_RING-HC"/>
</dbReference>
<dbReference type="InterPro" id="IPR040383">
    <property type="entry name" value="HAKAI/CBLL2"/>
</dbReference>
<dbReference type="InterPro" id="IPR013087">
    <property type="entry name" value="Znf_C2H2_type"/>
</dbReference>
<dbReference type="InterPro" id="IPR013083">
    <property type="entry name" value="Znf_RING/FYVE/PHD"/>
</dbReference>
<dbReference type="InterPro" id="IPR017907">
    <property type="entry name" value="Znf_RING_CS"/>
</dbReference>
<dbReference type="PANTHER" id="PTHR13480:SF0">
    <property type="entry name" value="E3 UBIQUITIN-PROTEIN LIGASE HAKAI"/>
    <property type="match status" value="1"/>
</dbReference>
<dbReference type="PANTHER" id="PTHR13480">
    <property type="entry name" value="E3 UBIQUITIN-PROTEIN LIGASE HAKAI-RELATED"/>
    <property type="match status" value="1"/>
</dbReference>
<dbReference type="PROSITE" id="PS00518">
    <property type="entry name" value="ZF_RING_1"/>
    <property type="match status" value="1"/>
</dbReference>
<dbReference type="PROSITE" id="PS00028">
    <property type="entry name" value="ZINC_FINGER_C2H2_1"/>
    <property type="match status" value="1"/>
</dbReference>
<sequence length="360" mass="39772">MLQIRLRRDSPTETGNGARPSPTETVTVACPDHLVLADLPVAKGIGSVTPTTVIKPVGRRSRRQLGERVHFCVRCDFPIAIYGRLIPCDHAFCLECARSDSICYLCDERIQKIQTIKMMEGIFICAAPHCLRSFLKKLDFEAHVHDLHGSLLQADAEKEDGNQSDVQSTMQQSSASESTLRAPLRSQLQQSRELNRSASFAKSQSGFSQVQNYPPDSDNSRPPGFETASPKPGIRFPDYPQPMNLMQPPSLPVPMNQNPGLPQQFGFPSYPTTESGSSQQFFNGAQYEMTRTESGGSEQSSLLGYPPPSPMTNLNFQGSYPPPSWNPGMAPPHTTQQVNRGRDGQSFGWPQENRDGFGQE</sequence>
<protein>
    <recommendedName>
        <fullName evidence="6">E3 ubiquitin-protein ligase HAKAI homolog</fullName>
        <ecNumber evidence="6">2.3.2.27</ecNumber>
    </recommendedName>
    <alternativeName>
        <fullName evidence="6">RING-type E3 ubiquitin transferase HAKAI</fullName>
    </alternativeName>
</protein>
<gene>
    <name evidence="5" type="primary">HAKAI</name>
    <name evidence="7" type="ordered locus">At5g01160</name>
    <name evidence="8" type="ORF">F7J8_140</name>
</gene>
<accession>Q9LFC0</accession>
<accession>A0A178UJ32</accession>
<name>HAKAI_ARATH</name>
<evidence type="ECO:0000255" key="1">
    <source>
        <dbReference type="PROSITE-ProRule" id="PRU00042"/>
    </source>
</evidence>
<evidence type="ECO:0000255" key="2">
    <source>
        <dbReference type="PROSITE-ProRule" id="PRU00175"/>
    </source>
</evidence>
<evidence type="ECO:0000256" key="3">
    <source>
        <dbReference type="SAM" id="MobiDB-lite"/>
    </source>
</evidence>
<evidence type="ECO:0000269" key="4">
    <source>
    </source>
</evidence>
<evidence type="ECO:0000303" key="5">
    <source>
    </source>
</evidence>
<evidence type="ECO:0000305" key="6"/>
<evidence type="ECO:0000312" key="7">
    <source>
        <dbReference type="Araport" id="AT5G01160"/>
    </source>
</evidence>
<evidence type="ECO:0000312" key="8">
    <source>
        <dbReference type="EMBL" id="CAB69844.1"/>
    </source>
</evidence>